<dbReference type="EMBL" id="U16849">
    <property type="protein sequence ID" value="AAA79373.1"/>
    <property type="molecule type" value="Genomic_DNA"/>
</dbReference>
<dbReference type="EMBL" id="AE004439">
    <property type="protein sequence ID" value="AAK03050.1"/>
    <property type="molecule type" value="Genomic_DNA"/>
</dbReference>
<dbReference type="RefSeq" id="WP_005722918.1">
    <property type="nucleotide sequence ID" value="NC_002663.1"/>
</dbReference>
<dbReference type="SMR" id="Q51886"/>
<dbReference type="STRING" id="272843.PM0966"/>
<dbReference type="EnsemblBacteria" id="AAK03050">
    <property type="protein sequence ID" value="AAK03050"/>
    <property type="gene ID" value="PM0966"/>
</dbReference>
<dbReference type="GeneID" id="77206276"/>
<dbReference type="KEGG" id="pmu:PM0966"/>
<dbReference type="HOGENOM" id="CLU_016890_9_4_6"/>
<dbReference type="OrthoDB" id="9809164at2"/>
<dbReference type="Proteomes" id="UP000000809">
    <property type="component" value="Chromosome"/>
</dbReference>
<dbReference type="GO" id="GO:0009279">
    <property type="term" value="C:cell outer membrane"/>
    <property type="evidence" value="ECO:0007669"/>
    <property type="project" value="UniProtKB-SubCell"/>
</dbReference>
<dbReference type="GO" id="GO:0051301">
    <property type="term" value="P:cell division"/>
    <property type="evidence" value="ECO:0007669"/>
    <property type="project" value="UniProtKB-UniRule"/>
</dbReference>
<dbReference type="CDD" id="cd07185">
    <property type="entry name" value="OmpA_C-like"/>
    <property type="match status" value="1"/>
</dbReference>
<dbReference type="FunFam" id="3.30.1330.60:FF:000002">
    <property type="entry name" value="Peptidoglycan-associated lipoprotein"/>
    <property type="match status" value="1"/>
</dbReference>
<dbReference type="Gene3D" id="3.30.1330.60">
    <property type="entry name" value="OmpA-like domain"/>
    <property type="match status" value="1"/>
</dbReference>
<dbReference type="HAMAP" id="MF_02204">
    <property type="entry name" value="Pal"/>
    <property type="match status" value="1"/>
</dbReference>
<dbReference type="InterPro" id="IPR050330">
    <property type="entry name" value="Bact_OuterMem_StrucFunc"/>
</dbReference>
<dbReference type="InterPro" id="IPR006664">
    <property type="entry name" value="OMP_bac"/>
</dbReference>
<dbReference type="InterPro" id="IPR006665">
    <property type="entry name" value="OmpA-like"/>
</dbReference>
<dbReference type="InterPro" id="IPR006690">
    <property type="entry name" value="OMPA-like_CS"/>
</dbReference>
<dbReference type="InterPro" id="IPR036737">
    <property type="entry name" value="OmpA-like_sf"/>
</dbReference>
<dbReference type="InterPro" id="IPR039001">
    <property type="entry name" value="Pal"/>
</dbReference>
<dbReference type="InterPro" id="IPR014169">
    <property type="entry name" value="Pal_lipo_C"/>
</dbReference>
<dbReference type="NCBIfam" id="TIGR02802">
    <property type="entry name" value="Pal_lipo"/>
    <property type="match status" value="1"/>
</dbReference>
<dbReference type="PANTHER" id="PTHR30329:SF21">
    <property type="entry name" value="LIPOPROTEIN YIAD-RELATED"/>
    <property type="match status" value="1"/>
</dbReference>
<dbReference type="PANTHER" id="PTHR30329">
    <property type="entry name" value="STATOR ELEMENT OF FLAGELLAR MOTOR COMPLEX"/>
    <property type="match status" value="1"/>
</dbReference>
<dbReference type="Pfam" id="PF00691">
    <property type="entry name" value="OmpA"/>
    <property type="match status" value="1"/>
</dbReference>
<dbReference type="PRINTS" id="PR01021">
    <property type="entry name" value="OMPADOMAIN"/>
</dbReference>
<dbReference type="SUPFAM" id="SSF103088">
    <property type="entry name" value="OmpA-like"/>
    <property type="match status" value="1"/>
</dbReference>
<dbReference type="PROSITE" id="PS01068">
    <property type="entry name" value="OMPA_1"/>
    <property type="match status" value="1"/>
</dbReference>
<dbReference type="PROSITE" id="PS51123">
    <property type="entry name" value="OMPA_2"/>
    <property type="match status" value="1"/>
</dbReference>
<dbReference type="PROSITE" id="PS51257">
    <property type="entry name" value="PROKAR_LIPOPROTEIN"/>
    <property type="match status" value="1"/>
</dbReference>
<proteinExistence type="inferred from homology"/>
<reference key="1">
    <citation type="journal article" date="1995" name="Infect. Immun.">
        <title>Pasteurella multocida produces a protein with homology to the P6 outer membrane protein of Haemophilus influenzae.</title>
        <authorList>
            <person name="Kasten R.W."/>
            <person name="Hansen L.M."/>
            <person name="Hinojoza J."/>
            <person name="Bieber D."/>
            <person name="Ruehl W.W."/>
            <person name="Hirsh D.C."/>
        </authorList>
    </citation>
    <scope>NUCLEOTIDE SEQUENCE [GENOMIC DNA]</scope>
    <source>
        <strain>T16</strain>
    </source>
</reference>
<reference key="2">
    <citation type="journal article" date="2001" name="Proc. Natl. Acad. Sci. U.S.A.">
        <title>Complete genomic sequence of Pasteurella multocida Pm70.</title>
        <authorList>
            <person name="May B.J."/>
            <person name="Zhang Q."/>
            <person name="Li L.L."/>
            <person name="Paustian M.L."/>
            <person name="Whittam T.S."/>
            <person name="Kapur V."/>
        </authorList>
    </citation>
    <scope>NUCLEOTIDE SEQUENCE [LARGE SCALE GENOMIC DNA]</scope>
    <source>
        <strain>Pm70</strain>
    </source>
</reference>
<comment type="function">
    <text evidence="1">Part of the Tol-Pal system, which plays a role in outer membrane invagination during cell division and is important for maintaining outer membrane integrity.</text>
</comment>
<comment type="subunit">
    <text evidence="1">The Tol-Pal system is composed of five core proteins: the inner membrane proteins TolA, TolQ and TolR, the periplasmic protein TolB and the outer membrane protein Pal. They form a network linking the inner and outer membranes and the peptidoglycan layer.</text>
</comment>
<comment type="subcellular location">
    <subcellularLocation>
        <location evidence="1">Cell outer membrane</location>
        <topology evidence="1">Lipid-anchor</topology>
    </subcellularLocation>
</comment>
<comment type="similarity">
    <text evidence="1">Belongs to the Pal lipoprotein family.</text>
</comment>
<name>PAL_PASMU</name>
<protein>
    <recommendedName>
        <fullName evidence="1">Peptidoglycan-associated lipoprotein</fullName>
        <shortName evidence="1">PAL</shortName>
    </recommendedName>
    <alternativeName>
        <fullName>Outer membrane protein P6</fullName>
        <shortName>OMP P6</shortName>
    </alternativeName>
    <alternativeName>
        <fullName>P6-like</fullName>
    </alternativeName>
</protein>
<gene>
    <name evidence="1" type="primary">pal</name>
    <name type="ordered locus">PM0966</name>
</gene>
<keyword id="KW-0131">Cell cycle</keyword>
<keyword id="KW-0132">Cell division</keyword>
<keyword id="KW-0998">Cell outer membrane</keyword>
<keyword id="KW-0449">Lipoprotein</keyword>
<keyword id="KW-0472">Membrane</keyword>
<keyword id="KW-0564">Palmitate</keyword>
<keyword id="KW-1185">Reference proteome</keyword>
<keyword id="KW-0732">Signal</keyword>
<evidence type="ECO:0000255" key="1">
    <source>
        <dbReference type="HAMAP-Rule" id="MF_02204"/>
    </source>
</evidence>
<feature type="signal peptide" evidence="1">
    <location>
        <begin position="1"/>
        <end position="19"/>
    </location>
</feature>
<feature type="chain" id="PRO_0000020125" description="Peptidoglycan-associated lipoprotein" evidence="1">
    <location>
        <begin position="20"/>
        <end position="150"/>
    </location>
</feature>
<feature type="domain" description="OmpA-like" evidence="1">
    <location>
        <begin position="37"/>
        <end position="150"/>
    </location>
</feature>
<feature type="lipid moiety-binding region" description="N-palmitoyl cysteine" evidence="1">
    <location>
        <position position="20"/>
    </location>
</feature>
<feature type="lipid moiety-binding region" description="S-diacylglycerol cysteine" evidence="1">
    <location>
        <position position="20"/>
    </location>
</feature>
<sequence length="150" mass="16213">MKKLTKVLLVAGSVAVLAACGSSKKDESAGQMFGGYSVQDLQQRYNTVYFGFDKYNIEGEYVQILDAHAAFLNATPATKVVVEGNTDERGTPEYNIALGQRRADAVKHYLSAKGVQAGQVSTVSYGEEKPAVLGHDEAAYSKNRRAVLAY</sequence>
<organism>
    <name type="scientific">Pasteurella multocida (strain Pm70)</name>
    <dbReference type="NCBI Taxonomy" id="272843"/>
    <lineage>
        <taxon>Bacteria</taxon>
        <taxon>Pseudomonadati</taxon>
        <taxon>Pseudomonadota</taxon>
        <taxon>Gammaproteobacteria</taxon>
        <taxon>Pasteurellales</taxon>
        <taxon>Pasteurellaceae</taxon>
        <taxon>Pasteurella</taxon>
    </lineage>
</organism>
<accession>Q51886</accession>